<keyword id="KW-0167">Capsid protein</keyword>
<keyword id="KW-1152">Outer capsid protein</keyword>
<keyword id="KW-1185">Reference proteome</keyword>
<keyword id="KW-0946">Virion</keyword>
<sequence>MDEILYNDNVMIVNDEETSGDVNNQQLISNETIANIQTRLKQLQVSSDSDLEDYINARKMLIEMLNARKEYIPDVLSSLSVERLKSIDLIVQKLNSCEHSIIEHANILDQLQNEITSLKTENEYIVRLNDINAKKAKLFDDFNAKYEDDVGPLYVYAASEDVRQAAIYLSYMMRMIITFENETIESNFIVSDSLYIGDTILNVTISTDLQLGNRTVNVTMDDISESFVILEREYIELYLTRHVHKILNNTISYSTALVIFKRTVEDISIPSQIVNTVLFQQQISNSVTVKDVSKSLVCDFKIDAETELYILLPTIIPDSYSMDILGNQEFMLYLSDLYAFNLLQEILDVLYIDQLEKGLENEDNRAIEQLTLQNAQSIRYILNTLQYVPLYKPYDILIENGILNSIEYAAPLMYIKNEYISKNITRTSDKYTTDRVIGAHVLSGSNMDSLPNTAFKQKLFMNTQSVLTQENPIYEDTDIIIYAVCVISREYDDTICGSGYTYTTSNMYANRSEFIRMNGCIADSVPVKTSTIVKCTYSLIDANRIGLLYNKTRTNIKINQILICFKNSFAVPTSLNVAMDVKIQCLKKTETLSVTQAKPSQILLENGISYFGIICDISFSSDYVFDGNESINFTLQPNTNISGKKELVMYGRQGGGMQISDMFQHKQDSFEYSIKVGLVCNSTQIGMGQWFEIFSTLIQGEFIGNIDTLRESTIRGISNIYDFTDVREFLHEYKISIVKLSIQCLRAMSAGVQDVIVAYSHALSNIDALILDITVEMNDFSNRLTTLEDKVKDIEKWIQNQIDSQNTTIWGSLLDTFVNLIIATALGYATAGIGVLVTKISVAVLSFTSRALTSIARGLQAAGHKVSTLFKLHITQPFLNGAHSLKLLTQKFNAVQGNLTKYERKYITALELSEANNYAAIAKYLKNLNPEIKLAEAINHKLVYSSRYVNPVFKLGNEVMSTVEINYHGLTAIGKLPQLRTPTKKLLSSDFGTTLMKKNKAPAHAYMVITDVDARSEYDLVTKYILGVSEGFTSTTKHVTAGSFKLQYEFRKHPTTNKTTVSFSTYQDTGYTAEEVKLLFNRYFKNRTNITNANQQWELLSSKFMSLQTSTLNSQRFVLPTSHRTTALYEAFKNTRRFDYNLLTNNCQNFCQDSLNWLENGVINGSLIQHSDQLAIKYVNALRGDLSLI</sequence>
<proteinExistence type="predicted"/>
<name>VP1_APRVF</name>
<comment type="subcellular location">
    <subcellularLocation>
        <location evidence="2">Virion</location>
    </subcellularLocation>
</comment>
<protein>
    <recommendedName>
        <fullName>Putative structural protein VP1</fullName>
    </recommendedName>
</protein>
<dbReference type="EMBL" id="DQ087276">
    <property type="protein sequence ID" value="AAZ94068.1"/>
    <property type="molecule type" value="Genomic_RNA"/>
</dbReference>
<dbReference type="RefSeq" id="YP_443935.1">
    <property type="nucleotide sequence ID" value="NC_007666.1"/>
</dbReference>
<dbReference type="SMR" id="Q2Y0F0"/>
<dbReference type="KEGG" id="vg:5076688"/>
<dbReference type="Proteomes" id="UP000001676">
    <property type="component" value="Genome"/>
</dbReference>
<dbReference type="GO" id="GO:0039624">
    <property type="term" value="C:viral outer capsid"/>
    <property type="evidence" value="ECO:0007669"/>
    <property type="project" value="UniProtKB-KW"/>
</dbReference>
<dbReference type="GO" id="GO:0008233">
    <property type="term" value="F:peptidase activity"/>
    <property type="evidence" value="ECO:0007669"/>
    <property type="project" value="InterPro"/>
</dbReference>
<dbReference type="InterPro" id="IPR008580">
    <property type="entry name" value="PPPDE_dom"/>
</dbReference>
<dbReference type="PROSITE" id="PS51858">
    <property type="entry name" value="PPPDE"/>
    <property type="match status" value="1"/>
</dbReference>
<organism>
    <name type="scientific">Aedes pseudoscutellaris reovirus (isolate France)</name>
    <name type="common">ApRV</name>
    <dbReference type="NCBI Taxonomy" id="648170"/>
    <lineage>
        <taxon>Viruses</taxon>
        <taxon>Riboviria</taxon>
        <taxon>Orthornavirae</taxon>
        <taxon>Duplornaviricota</taxon>
        <taxon>Resentoviricetes</taxon>
        <taxon>Reovirales</taxon>
        <taxon>Spinareoviridae</taxon>
        <taxon>Dinovernavirus</taxon>
        <taxon>Aedes pseudoscutellaris reovirus</taxon>
    </lineage>
</organism>
<evidence type="ECO:0000255" key="1">
    <source>
        <dbReference type="PROSITE-ProRule" id="PRU01205"/>
    </source>
</evidence>
<evidence type="ECO:0000305" key="2"/>
<organismHost>
    <name type="scientific">Aedes pseudoscutellaris</name>
    <name type="common">Mosquito</name>
    <name type="synonym">Stegomyia pseudoscutellaris</name>
    <dbReference type="NCBI Taxonomy" id="316597"/>
</organismHost>
<accession>Q2Y0F0</accession>
<reference key="1">
    <citation type="journal article" date="2005" name="Virology">
        <title>Expansion of family Reoviridae to include nine-segmented dsRNA viruses: isolation and characterization of a new virus designated Aedes pseudoscutellaris reovirus assigned to a proposed genus (Dinovernavirus).</title>
        <authorList>
            <person name="Attoui H."/>
            <person name="Mohd Jaafar F."/>
            <person name="Belhouchet M."/>
            <person name="Biagini P."/>
            <person name="Cantaloube J.F."/>
            <person name="de Micco P."/>
            <person name="de Lamballerie X."/>
        </authorList>
    </citation>
    <scope>NUCLEOTIDE SEQUENCE [GENOMIC RNA]</scope>
</reference>
<feature type="chain" id="PRO_0000403277" description="Putative structural protein VP1">
    <location>
        <begin position="1"/>
        <end position="1189"/>
    </location>
</feature>
<feature type="domain" description="PPPDE" evidence="1">
    <location>
        <begin position="981"/>
        <end position="1187"/>
    </location>
</feature>
<feature type="active site" evidence="1">
    <location>
        <position position="1004"/>
    </location>
</feature>
<feature type="active site" evidence="1">
    <location>
        <position position="1147"/>
    </location>
</feature>
<gene>
    <name type="primary">S1</name>
</gene>